<comment type="function">
    <molecule>Isoform Membrane-bound glycoprotein G</molecule>
    <text evidence="1">Attaches the virion to the host cell membrane by interacting with heparan sulfate, initiating the infection. Unlike the other paramyxovirus attachment proteins, lacks both neuraminidase and hemagglutinating activities.</text>
</comment>
<comment type="function">
    <molecule>Isoform Secreted glycoprotein G</molecule>
    <text evidence="1">Helps the virus escape antibody-dependent restriction of replication by acting as an antigen decoy and by modulating the activity of leukocytes bearing Fc-gamma receptors.</text>
</comment>
<comment type="subunit">
    <molecule>Isoform Membrane-bound glycoprotein G</molecule>
    <text evidence="1">Homooligomer. Interacts (via N-terminus) with protein M. Part of a complex composed of F1, F2 and G glycoproteins. Interacts with protein SH. Interacts with host heparate sulfate; this interaction probably participates in the viral attachment to the host cell.</text>
</comment>
<comment type="subcellular location">
    <molecule>Isoform Membrane-bound glycoprotein G</molecule>
    <subcellularLocation>
        <location evidence="1">Virion membrane</location>
        <topology evidence="1">Single-pass type II membrane protein</topology>
    </subcellularLocation>
    <subcellularLocation>
        <location evidence="1">Host cell membrane</location>
        <topology evidence="1">Single-pass type II membrane protein</topology>
    </subcellularLocation>
</comment>
<comment type="subcellular location">
    <molecule>Isoform Secreted glycoprotein G</molecule>
    <subcellularLocation>
        <location evidence="2">Secreted</location>
    </subcellularLocation>
    <text evidence="2">The protein is shed from infected cells before the appearance of progeny virus. The initiation at the downstream methionine removes a portion of the transmembrane domain. The remaining hydrophobic portion of the sG protein is essential for translocating it into the lumen of the ER during translation and would likely maintain its membrane association until a proteolytic event releases the mature sG protein into the medium.</text>
</comment>
<comment type="alternative products">
    <event type="alternative initiation"/>
    <isoform>
        <id>O10686-1</id>
        <name>Membrane-bound glycoprotein G</name>
        <sequence type="displayed"/>
    </isoform>
    <isoform>
        <id>O10686-2</id>
        <name>Secreted glycoprotein G</name>
        <sequence type="described" ref="VSP_036519"/>
    </isoform>
</comment>
<comment type="domain">
    <molecule>Isoform Membrane-bound glycoprotein G</molecule>
    <text evidence="1">Contains a linear heparin binding domain essential for virus attachment to the host.</text>
</comment>
<comment type="PTM">
    <molecule>Isoform Secreted glycoprotein G</molecule>
    <text evidence="2">Cleaved to give rise to the mature sG protein which lacks the transmembrane domain.</text>
</comment>
<comment type="PTM">
    <molecule>Isoform Membrane-bound glycoprotein G</molecule>
    <text evidence="1">N- and O-glycosylated. May carry 30-40 separate O-linked carbohydrate chains distributed among the serine and threonine residues.</text>
</comment>
<comment type="PTM">
    <molecule>Isoform Membrane-bound glycoprotein G</molecule>
    <text evidence="1">Palmitoylated.</text>
</comment>
<comment type="similarity">
    <text evidence="5">Belongs to the pneumoviruses glycoprotein G family.</text>
</comment>
<keyword id="KW-0024">Alternative initiation</keyword>
<keyword id="KW-1015">Disulfide bond</keyword>
<keyword id="KW-0325">Glycoprotein</keyword>
<keyword id="KW-1032">Host cell membrane</keyword>
<keyword id="KW-1043">Host membrane</keyword>
<keyword id="KW-0945">Host-virus interaction</keyword>
<keyword id="KW-0472">Membrane</keyword>
<keyword id="KW-0964">Secreted</keyword>
<keyword id="KW-0812">Transmembrane</keyword>
<keyword id="KW-1133">Transmembrane helix</keyword>
<keyword id="KW-1161">Viral attachment to host cell</keyword>
<keyword id="KW-0899">Viral immunoevasion</keyword>
<keyword id="KW-0946">Virion</keyword>
<keyword id="KW-1160">Virus entry into host cell</keyword>
<protein>
    <recommendedName>
        <fullName>Major surface glycoprotein G</fullName>
    </recommendedName>
    <alternativeName>
        <fullName>Attachment glycoprotein G</fullName>
    </alternativeName>
    <alternativeName>
        <fullName>Membrane-bound glycoprotein</fullName>
        <shortName>mG</shortName>
    </alternativeName>
    <component>
        <recommendedName>
            <fullName evidence="2">Mature secreted glycoprotein G</fullName>
            <shortName evidence="2">Mature sG</shortName>
        </recommendedName>
    </component>
</protein>
<sequence length="257" mass="28362">MSNHTHHLKFKTLKRAWKASKYFIVGLSCLYKFNLKSLVQTALTTLAMITLTSLVITAIIYISVGNAKAKPTSKPTIQQTQQPQNHTSPFFTEHNYKSTHTSIQSTTLSQLPNTDTTRGTTYGHSIDETQNRKIKSQSTLPATRKPPINPSGSNPPENHQDHNNSQTLPYVPCSTCEGNLACLSLCQIGPERAPSRAPTITPKKTPKPKITKKPTTTTIHHRTSLKAKLQPKNNTAAPQQGILSSPEHHTNQSTTQI</sequence>
<name>GLYC_BRSVS</name>
<organismHost>
    <name type="scientific">Bos taurus</name>
    <name type="common">Bovine</name>
    <dbReference type="NCBI Taxonomy" id="9913"/>
</organismHost>
<organism>
    <name type="scientific">Bovine respiratory syncytial virus (strain Snook)</name>
    <name type="common">BRS</name>
    <dbReference type="NCBI Taxonomy" id="82824"/>
    <lineage>
        <taxon>Viruses</taxon>
        <taxon>Riboviria</taxon>
        <taxon>Orthornavirae</taxon>
        <taxon>Negarnaviricota</taxon>
        <taxon>Haploviricotina</taxon>
        <taxon>Monjiviricetes</taxon>
        <taxon>Mononegavirales</taxon>
        <taxon>Pneumoviridae</taxon>
        <taxon>Orthopneumovirus</taxon>
        <taxon>Orthopneumovirus bovis</taxon>
    </lineage>
</organism>
<feature type="chain" id="PRO_0000142851" description="Major surface glycoprotein G">
    <location>
        <begin position="1"/>
        <end position="257"/>
    </location>
</feature>
<feature type="chain" id="PRO_0000451320" description="Mature secreted glycoprotein G">
    <location>
        <begin position="66"/>
        <end position="257"/>
    </location>
</feature>
<feature type="topological domain" description="Cytoplasmic" evidence="3">
    <location>
        <begin position="1"/>
        <end position="37"/>
    </location>
</feature>
<feature type="transmembrane region" description="Helical" evidence="3">
    <location>
        <begin position="38"/>
        <end position="66"/>
    </location>
</feature>
<feature type="topological domain" description="Extracellular" evidence="3">
    <location>
        <begin position="67"/>
        <end position="257"/>
    </location>
</feature>
<feature type="region of interest" description="Disordered" evidence="4">
    <location>
        <begin position="70"/>
        <end position="166"/>
    </location>
</feature>
<feature type="region of interest" description="Binding to host heparan sulfate" evidence="1">
    <location>
        <begin position="187"/>
        <end position="198"/>
    </location>
</feature>
<feature type="region of interest" description="Disordered" evidence="4">
    <location>
        <begin position="193"/>
        <end position="257"/>
    </location>
</feature>
<feature type="compositionally biased region" description="Polar residues" evidence="4">
    <location>
        <begin position="73"/>
        <end position="90"/>
    </location>
</feature>
<feature type="compositionally biased region" description="Polar residues" evidence="4">
    <location>
        <begin position="98"/>
        <end position="123"/>
    </location>
</feature>
<feature type="compositionally biased region" description="Polar residues" evidence="4">
    <location>
        <begin position="150"/>
        <end position="166"/>
    </location>
</feature>
<feature type="compositionally biased region" description="Polar residues" evidence="4">
    <location>
        <begin position="231"/>
        <end position="243"/>
    </location>
</feature>
<feature type="site" description="Cleavage" evidence="1">
    <location>
        <begin position="65"/>
        <end position="66"/>
    </location>
</feature>
<feature type="glycosylation site" description="O-linked (GalNAc...) threonine; by host" evidence="1">
    <location>
        <position position="72"/>
    </location>
</feature>
<feature type="glycosylation site" description="O-linked (GalNAc...) threonine; by host" evidence="1">
    <location>
        <position position="80"/>
    </location>
</feature>
<feature type="glycosylation site" description="N-linked (GlcNAc...) asparagine; by host" evidence="3">
    <location>
        <position position="85"/>
    </location>
</feature>
<feature type="glycosylation site" description="O-linked (GalNAc...) threonine; by host" evidence="1">
    <location>
        <position position="87"/>
    </location>
</feature>
<feature type="glycosylation site" description="O-linked (GalNAc...) threonine; by host" evidence="1">
    <location>
        <position position="92"/>
    </location>
</feature>
<feature type="glycosylation site" description="O-linked (GalNAc...) serine; by host" evidence="3">
    <location>
        <position position="105"/>
    </location>
</feature>
<feature type="glycosylation site" description="O-linked (GalNAc...) threonine; by host" evidence="3">
    <location>
        <position position="139"/>
    </location>
</feature>
<feature type="glycosylation site" description="N-linked (GlcNAc...) asparagine; by host" evidence="3">
    <location>
        <position position="163"/>
    </location>
</feature>
<feature type="glycosylation site" description="O-linked (GalNAc...) threonine; by host" evidence="3">
    <location>
        <position position="199"/>
    </location>
</feature>
<feature type="glycosylation site" description="O-linked (GalNAc...) threonine; by host" evidence="3">
    <location>
        <position position="215"/>
    </location>
</feature>
<feature type="glycosylation site" description="N-linked (GlcNAc...) asparagine; by host" evidence="3">
    <location>
        <position position="233"/>
    </location>
</feature>
<feature type="glycosylation site" description="N-linked (GlcNAc...) asparagine; by host" evidence="3">
    <location>
        <position position="251"/>
    </location>
</feature>
<feature type="glycosylation site" description="O-linked (GalNAc...) serine; by host" evidence="3">
    <location>
        <position position="253"/>
    </location>
</feature>
<feature type="disulfide bond" evidence="1">
    <location>
        <begin position="173"/>
        <end position="186"/>
    </location>
</feature>
<feature type="disulfide bond" evidence="1">
    <location>
        <begin position="176"/>
        <end position="182"/>
    </location>
</feature>
<feature type="splice variant" id="VSP_036519" description="In isoform Secreted glycoprotein G." evidence="1">
    <location>
        <begin position="1"/>
        <end position="47"/>
    </location>
</feature>
<proteinExistence type="evidence at transcript level"/>
<dbReference type="EMBL" id="Y08719">
    <property type="protein sequence ID" value="CAA69969.1"/>
    <property type="molecule type" value="mRNA"/>
</dbReference>
<dbReference type="GlyCosmos" id="O10686">
    <property type="glycosylation" value="13 sites, No reported glycans"/>
</dbReference>
<dbReference type="GO" id="GO:0005576">
    <property type="term" value="C:extracellular region"/>
    <property type="evidence" value="ECO:0007669"/>
    <property type="project" value="UniProtKB-SubCell"/>
</dbReference>
<dbReference type="GO" id="GO:0020002">
    <property type="term" value="C:host cell plasma membrane"/>
    <property type="evidence" value="ECO:0007669"/>
    <property type="project" value="UniProtKB-SubCell"/>
</dbReference>
<dbReference type="GO" id="GO:0016020">
    <property type="term" value="C:membrane"/>
    <property type="evidence" value="ECO:0007669"/>
    <property type="project" value="UniProtKB-KW"/>
</dbReference>
<dbReference type="GO" id="GO:0055036">
    <property type="term" value="C:virion membrane"/>
    <property type="evidence" value="ECO:0007669"/>
    <property type="project" value="UniProtKB-SubCell"/>
</dbReference>
<dbReference type="GO" id="GO:0046718">
    <property type="term" value="P:symbiont entry into host cell"/>
    <property type="evidence" value="ECO:0007669"/>
    <property type="project" value="UniProtKB-KW"/>
</dbReference>
<dbReference type="GO" id="GO:0019062">
    <property type="term" value="P:virion attachment to host cell"/>
    <property type="evidence" value="ECO:0007669"/>
    <property type="project" value="UniProtKB-KW"/>
</dbReference>
<dbReference type="InterPro" id="IPR000925">
    <property type="entry name" value="G_prot"/>
</dbReference>
<dbReference type="Pfam" id="PF00802">
    <property type="entry name" value="Glycoprotein_G"/>
    <property type="match status" value="1"/>
</dbReference>
<reference key="1">
    <citation type="journal article" date="1997" name="Virology">
        <title>Antigenically distinct G glycoproteins of BRSV strains share a high degree of genetic homogeneity.</title>
        <authorList>
            <person name="Furze J."/>
            <person name="Roberts S."/>
            <person name="Wertz G."/>
            <person name="Taylor G."/>
        </authorList>
    </citation>
    <scope>NUCLEOTIDE SEQUENCE [MRNA]</scope>
</reference>
<gene>
    <name type="primary">G</name>
</gene>
<evidence type="ECO:0000250" key="1">
    <source>
        <dbReference type="UniProtKB" id="P03423"/>
    </source>
</evidence>
<evidence type="ECO:0000250" key="2">
    <source>
        <dbReference type="UniProtKB" id="P20895"/>
    </source>
</evidence>
<evidence type="ECO:0000255" key="3"/>
<evidence type="ECO:0000256" key="4">
    <source>
        <dbReference type="SAM" id="MobiDB-lite"/>
    </source>
</evidence>
<evidence type="ECO:0000305" key="5"/>
<accession>O10686</accession>